<proteinExistence type="inferred from homology"/>
<accession>B2Y1X3</accession>
<organism>
    <name type="scientific">Welwitschia mirabilis</name>
    <name type="common">Tree tumbo</name>
    <name type="synonym">Welwitschia bainesii</name>
    <dbReference type="NCBI Taxonomy" id="3377"/>
    <lineage>
        <taxon>Eukaryota</taxon>
        <taxon>Viridiplantae</taxon>
        <taxon>Streptophyta</taxon>
        <taxon>Embryophyta</taxon>
        <taxon>Tracheophyta</taxon>
        <taxon>Spermatophyta</taxon>
        <taxon>Gnetopsida</taxon>
        <taxon>Gnetidae</taxon>
        <taxon>Welwitschiales</taxon>
        <taxon>Welwitschiaceae</taxon>
        <taxon>Welwitschia</taxon>
    </lineage>
</organism>
<protein>
    <recommendedName>
        <fullName evidence="1">Photosystem II reaction center protein J</fullName>
        <shortName evidence="1">PSII-J</shortName>
    </recommendedName>
</protein>
<evidence type="ECO:0000255" key="1">
    <source>
        <dbReference type="HAMAP-Rule" id="MF_01305"/>
    </source>
</evidence>
<dbReference type="EMBL" id="EU342371">
    <property type="protein sequence ID" value="ABY26803.1"/>
    <property type="molecule type" value="Genomic_DNA"/>
</dbReference>
<dbReference type="EMBL" id="AP009568">
    <property type="protein sequence ID" value="BAH11215.1"/>
    <property type="molecule type" value="Genomic_DNA"/>
</dbReference>
<dbReference type="RefSeq" id="YP_001876590.1">
    <property type="nucleotide sequence ID" value="NC_010654.1"/>
</dbReference>
<dbReference type="SMR" id="B2Y1X3"/>
<dbReference type="GeneID" id="6276185"/>
<dbReference type="GO" id="GO:0009535">
    <property type="term" value="C:chloroplast thylakoid membrane"/>
    <property type="evidence" value="ECO:0007669"/>
    <property type="project" value="UniProtKB-SubCell"/>
</dbReference>
<dbReference type="GO" id="GO:0009539">
    <property type="term" value="C:photosystem II reaction center"/>
    <property type="evidence" value="ECO:0007669"/>
    <property type="project" value="InterPro"/>
</dbReference>
<dbReference type="GO" id="GO:0015979">
    <property type="term" value="P:photosynthesis"/>
    <property type="evidence" value="ECO:0007669"/>
    <property type="project" value="UniProtKB-UniRule"/>
</dbReference>
<dbReference type="Gene3D" id="6.10.250.2070">
    <property type="match status" value="1"/>
</dbReference>
<dbReference type="HAMAP" id="MF_01305">
    <property type="entry name" value="PSII_PsbJ"/>
    <property type="match status" value="1"/>
</dbReference>
<dbReference type="InterPro" id="IPR002682">
    <property type="entry name" value="PSII_PsbJ"/>
</dbReference>
<dbReference type="InterPro" id="IPR037267">
    <property type="entry name" value="PSII_PsbJ_sf"/>
</dbReference>
<dbReference type="PANTHER" id="PTHR34812">
    <property type="entry name" value="PHOTOSYSTEM II REACTION CENTER PROTEIN J"/>
    <property type="match status" value="1"/>
</dbReference>
<dbReference type="PANTHER" id="PTHR34812:SF3">
    <property type="entry name" value="PHOTOSYSTEM II REACTION CENTER PROTEIN J"/>
    <property type="match status" value="1"/>
</dbReference>
<dbReference type="Pfam" id="PF01788">
    <property type="entry name" value="PsbJ"/>
    <property type="match status" value="1"/>
</dbReference>
<dbReference type="SUPFAM" id="SSF161021">
    <property type="entry name" value="Photosystem II reaction center protein J, PsbJ"/>
    <property type="match status" value="1"/>
</dbReference>
<geneLocation type="chloroplast"/>
<keyword id="KW-0150">Chloroplast</keyword>
<keyword id="KW-0472">Membrane</keyword>
<keyword id="KW-0602">Photosynthesis</keyword>
<keyword id="KW-0604">Photosystem II</keyword>
<keyword id="KW-0934">Plastid</keyword>
<keyword id="KW-0674">Reaction center</keyword>
<keyword id="KW-0793">Thylakoid</keyword>
<keyword id="KW-0812">Transmembrane</keyword>
<keyword id="KW-1133">Transmembrane helix</keyword>
<name>PSBJ_WELMI</name>
<comment type="function">
    <text evidence="1">One of the components of the core complex of photosystem II (PSII). PSII is a light-driven water:plastoquinone oxidoreductase that uses light energy to abstract electrons from H(2)O, generating O(2) and a proton gradient subsequently used for ATP formation. It consists of a core antenna complex that captures photons, and an electron transfer chain that converts photonic excitation into a charge separation.</text>
</comment>
<comment type="subunit">
    <text evidence="1">PSII is composed of 1 copy each of membrane proteins PsbA, PsbB, PsbC, PsbD, PsbE, PsbF, PsbH, PsbI, PsbJ, PsbK, PsbL, PsbM, PsbT, PsbX, PsbY, PsbZ, Psb30/Ycf12, at least 3 peripheral proteins of the oxygen-evolving complex and a large number of cofactors. It forms dimeric complexes.</text>
</comment>
<comment type="subcellular location">
    <subcellularLocation>
        <location evidence="1">Plastid</location>
        <location evidence="1">Chloroplast thylakoid membrane</location>
        <topology evidence="1">Single-pass membrane protein</topology>
    </subcellularLocation>
</comment>
<comment type="similarity">
    <text evidence="1">Belongs to the PsbJ family.</text>
</comment>
<feature type="chain" id="PRO_1000165370" description="Photosystem II reaction center protein J">
    <location>
        <begin position="1"/>
        <end position="39"/>
    </location>
</feature>
<feature type="transmembrane region" description="Helical" evidence="1">
    <location>
        <begin position="7"/>
        <end position="27"/>
    </location>
</feature>
<sequence length="39" mass="4178">MADFTRIPLWLIGTIVGILVIGLIGIYFYGSYSGLGSSL</sequence>
<reference key="1">
    <citation type="journal article" date="2008" name="BMC Evol. Biol.">
        <title>The complete plastid genome sequence of Welwitschia mirabilis: an unusually compact plastome with accelerated divergence rates.</title>
        <authorList>
            <person name="McCoy S.R."/>
            <person name="Kuehl J.V."/>
            <person name="Boore J.L."/>
            <person name="Raubeson L.A."/>
        </authorList>
    </citation>
    <scope>NUCLEOTIDE SEQUENCE [LARGE SCALE GENOMIC DNA]</scope>
</reference>
<reference key="2">
    <citation type="journal article" date="2009" name="Mol. Phylogenet. Evol.">
        <title>Evolution of reduced and compact chloroplast genomes (cpDNAs) in gnetophytes: Selection toward a lower-cost strategy.</title>
        <authorList>
            <person name="Wu C.-S."/>
            <person name="Lai Y.-T."/>
            <person name="Lin C.-P."/>
            <person name="Wang Y.-N."/>
            <person name="Chaw S.-M."/>
        </authorList>
    </citation>
    <scope>NUCLEOTIDE SEQUENCE [LARGE SCALE GENOMIC DNA]</scope>
</reference>
<gene>
    <name evidence="1" type="primary">psbJ</name>
</gene>